<feature type="chain" id="PRO_0000252793" description="Ketol-acid reductoisomerase (NADP(+))">
    <location>
        <begin position="1"/>
        <end position="331"/>
    </location>
</feature>
<feature type="domain" description="KARI N-terminal Rossmann" evidence="2">
    <location>
        <begin position="2"/>
        <end position="182"/>
    </location>
</feature>
<feature type="domain" description="KARI C-terminal knotted" evidence="3">
    <location>
        <begin position="183"/>
        <end position="328"/>
    </location>
</feature>
<feature type="active site" evidence="1">
    <location>
        <position position="108"/>
    </location>
</feature>
<feature type="binding site" evidence="1">
    <location>
        <begin position="25"/>
        <end position="28"/>
    </location>
    <ligand>
        <name>NADP(+)</name>
        <dbReference type="ChEBI" id="CHEBI:58349"/>
    </ligand>
</feature>
<feature type="binding site" evidence="1">
    <location>
        <position position="51"/>
    </location>
    <ligand>
        <name>NADP(+)</name>
        <dbReference type="ChEBI" id="CHEBI:58349"/>
    </ligand>
</feature>
<feature type="binding site" evidence="1">
    <location>
        <position position="53"/>
    </location>
    <ligand>
        <name>NADP(+)</name>
        <dbReference type="ChEBI" id="CHEBI:58349"/>
    </ligand>
</feature>
<feature type="binding site" evidence="1">
    <location>
        <begin position="83"/>
        <end position="86"/>
    </location>
    <ligand>
        <name>NADP(+)</name>
        <dbReference type="ChEBI" id="CHEBI:58349"/>
    </ligand>
</feature>
<feature type="binding site" evidence="1">
    <location>
        <position position="134"/>
    </location>
    <ligand>
        <name>NADP(+)</name>
        <dbReference type="ChEBI" id="CHEBI:58349"/>
    </ligand>
</feature>
<feature type="binding site" evidence="1">
    <location>
        <position position="191"/>
    </location>
    <ligand>
        <name>Mg(2+)</name>
        <dbReference type="ChEBI" id="CHEBI:18420"/>
        <label>1</label>
    </ligand>
</feature>
<feature type="binding site" evidence="1">
    <location>
        <position position="191"/>
    </location>
    <ligand>
        <name>Mg(2+)</name>
        <dbReference type="ChEBI" id="CHEBI:18420"/>
        <label>2</label>
    </ligand>
</feature>
<feature type="binding site" evidence="1">
    <location>
        <position position="195"/>
    </location>
    <ligand>
        <name>Mg(2+)</name>
        <dbReference type="ChEBI" id="CHEBI:18420"/>
        <label>1</label>
    </ligand>
</feature>
<feature type="binding site" evidence="1">
    <location>
        <position position="227"/>
    </location>
    <ligand>
        <name>Mg(2+)</name>
        <dbReference type="ChEBI" id="CHEBI:18420"/>
        <label>2</label>
    </ligand>
</feature>
<feature type="binding site" evidence="1">
    <location>
        <position position="231"/>
    </location>
    <ligand>
        <name>Mg(2+)</name>
        <dbReference type="ChEBI" id="CHEBI:18420"/>
        <label>2</label>
    </ligand>
</feature>
<feature type="binding site" evidence="1">
    <location>
        <position position="252"/>
    </location>
    <ligand>
        <name>substrate</name>
    </ligand>
</feature>
<comment type="function">
    <text evidence="1">Involved in the biosynthesis of branched-chain amino acids (BCAA). Catalyzes an alkyl-migration followed by a ketol-acid reduction of (S)-2-acetolactate (S2AL) to yield (R)-2,3-dihydroxy-isovalerate. In the isomerase reaction, S2AL is rearranged via a Mg-dependent methyl migration to produce 3-hydroxy-3-methyl-2-ketobutyrate (HMKB). In the reductase reaction, this 2-ketoacid undergoes a metal-dependent reduction by NADPH to yield (R)-2,3-dihydroxy-isovalerate.</text>
</comment>
<comment type="catalytic activity">
    <reaction evidence="1">
        <text>(2R)-2,3-dihydroxy-3-methylbutanoate + NADP(+) = (2S)-2-acetolactate + NADPH + H(+)</text>
        <dbReference type="Rhea" id="RHEA:22068"/>
        <dbReference type="ChEBI" id="CHEBI:15378"/>
        <dbReference type="ChEBI" id="CHEBI:49072"/>
        <dbReference type="ChEBI" id="CHEBI:57783"/>
        <dbReference type="ChEBI" id="CHEBI:58349"/>
        <dbReference type="ChEBI" id="CHEBI:58476"/>
        <dbReference type="EC" id="1.1.1.86"/>
    </reaction>
</comment>
<comment type="catalytic activity">
    <reaction evidence="1">
        <text>(2R,3R)-2,3-dihydroxy-3-methylpentanoate + NADP(+) = (S)-2-ethyl-2-hydroxy-3-oxobutanoate + NADPH + H(+)</text>
        <dbReference type="Rhea" id="RHEA:13493"/>
        <dbReference type="ChEBI" id="CHEBI:15378"/>
        <dbReference type="ChEBI" id="CHEBI:49256"/>
        <dbReference type="ChEBI" id="CHEBI:49258"/>
        <dbReference type="ChEBI" id="CHEBI:57783"/>
        <dbReference type="ChEBI" id="CHEBI:58349"/>
        <dbReference type="EC" id="1.1.1.86"/>
    </reaction>
</comment>
<comment type="cofactor">
    <cofactor evidence="1">
        <name>Mg(2+)</name>
        <dbReference type="ChEBI" id="CHEBI:18420"/>
    </cofactor>
    <text evidence="1">Binds 2 magnesium ions per subunit.</text>
</comment>
<comment type="pathway">
    <text evidence="1">Amino-acid biosynthesis; L-isoleucine biosynthesis; L-isoleucine from 2-oxobutanoate: step 2/4.</text>
</comment>
<comment type="pathway">
    <text evidence="1">Amino-acid biosynthesis; L-valine biosynthesis; L-valine from pyruvate: step 2/4.</text>
</comment>
<comment type="similarity">
    <text evidence="1">Belongs to the ketol-acid reductoisomerase family.</text>
</comment>
<reference key="1">
    <citation type="submission" date="2005-07" db="EMBL/GenBank/DDBJ databases">
        <title>Complete sequence of Synechococcus sp. CC9605.</title>
        <authorList>
            <consortium name="US DOE Joint Genome Institute"/>
            <person name="Copeland A."/>
            <person name="Lucas S."/>
            <person name="Lapidus A."/>
            <person name="Barry K."/>
            <person name="Detter J.C."/>
            <person name="Glavina T."/>
            <person name="Hammon N."/>
            <person name="Israni S."/>
            <person name="Pitluck S."/>
            <person name="Schmutz J."/>
            <person name="Martinez M."/>
            <person name="Larimer F."/>
            <person name="Land M."/>
            <person name="Kyrpides N."/>
            <person name="Ivanova N."/>
            <person name="Richardson P."/>
        </authorList>
    </citation>
    <scope>NUCLEOTIDE SEQUENCE [LARGE SCALE GENOMIC DNA]</scope>
    <source>
        <strain>CC9605</strain>
    </source>
</reference>
<accession>Q3ALC5</accession>
<evidence type="ECO:0000255" key="1">
    <source>
        <dbReference type="HAMAP-Rule" id="MF_00435"/>
    </source>
</evidence>
<evidence type="ECO:0000255" key="2">
    <source>
        <dbReference type="PROSITE-ProRule" id="PRU01197"/>
    </source>
</evidence>
<evidence type="ECO:0000255" key="3">
    <source>
        <dbReference type="PROSITE-ProRule" id="PRU01198"/>
    </source>
</evidence>
<keyword id="KW-0028">Amino-acid biosynthesis</keyword>
<keyword id="KW-0100">Branched-chain amino acid biosynthesis</keyword>
<keyword id="KW-0460">Magnesium</keyword>
<keyword id="KW-0479">Metal-binding</keyword>
<keyword id="KW-0521">NADP</keyword>
<keyword id="KW-0560">Oxidoreductase</keyword>
<dbReference type="EC" id="1.1.1.86" evidence="1"/>
<dbReference type="EMBL" id="CP000110">
    <property type="protein sequence ID" value="ABB34607.1"/>
    <property type="molecule type" value="Genomic_DNA"/>
</dbReference>
<dbReference type="RefSeq" id="WP_011363832.1">
    <property type="nucleotide sequence ID" value="NC_007516.1"/>
</dbReference>
<dbReference type="SMR" id="Q3ALC5"/>
<dbReference type="STRING" id="110662.Syncc9605_0839"/>
<dbReference type="KEGG" id="syd:Syncc9605_0839"/>
<dbReference type="eggNOG" id="COG0059">
    <property type="taxonomic scope" value="Bacteria"/>
</dbReference>
<dbReference type="HOGENOM" id="CLU_033821_0_1_3"/>
<dbReference type="OrthoDB" id="9804088at2"/>
<dbReference type="UniPathway" id="UPA00047">
    <property type="reaction ID" value="UER00056"/>
</dbReference>
<dbReference type="UniPathway" id="UPA00049">
    <property type="reaction ID" value="UER00060"/>
</dbReference>
<dbReference type="GO" id="GO:0005829">
    <property type="term" value="C:cytosol"/>
    <property type="evidence" value="ECO:0007669"/>
    <property type="project" value="TreeGrafter"/>
</dbReference>
<dbReference type="GO" id="GO:0004455">
    <property type="term" value="F:ketol-acid reductoisomerase activity"/>
    <property type="evidence" value="ECO:0007669"/>
    <property type="project" value="UniProtKB-UniRule"/>
</dbReference>
<dbReference type="GO" id="GO:0000287">
    <property type="term" value="F:magnesium ion binding"/>
    <property type="evidence" value="ECO:0007669"/>
    <property type="project" value="UniProtKB-UniRule"/>
</dbReference>
<dbReference type="GO" id="GO:0050661">
    <property type="term" value="F:NADP binding"/>
    <property type="evidence" value="ECO:0007669"/>
    <property type="project" value="InterPro"/>
</dbReference>
<dbReference type="GO" id="GO:0009097">
    <property type="term" value="P:isoleucine biosynthetic process"/>
    <property type="evidence" value="ECO:0007669"/>
    <property type="project" value="UniProtKB-UniRule"/>
</dbReference>
<dbReference type="GO" id="GO:0009099">
    <property type="term" value="P:L-valine biosynthetic process"/>
    <property type="evidence" value="ECO:0007669"/>
    <property type="project" value="UniProtKB-UniRule"/>
</dbReference>
<dbReference type="FunFam" id="3.40.50.720:FF:000023">
    <property type="entry name" value="Ketol-acid reductoisomerase (NADP(+))"/>
    <property type="match status" value="1"/>
</dbReference>
<dbReference type="Gene3D" id="6.10.240.10">
    <property type="match status" value="1"/>
</dbReference>
<dbReference type="Gene3D" id="3.40.50.720">
    <property type="entry name" value="NAD(P)-binding Rossmann-like Domain"/>
    <property type="match status" value="1"/>
</dbReference>
<dbReference type="HAMAP" id="MF_00435">
    <property type="entry name" value="IlvC"/>
    <property type="match status" value="1"/>
</dbReference>
<dbReference type="InterPro" id="IPR008927">
    <property type="entry name" value="6-PGluconate_DH-like_C_sf"/>
</dbReference>
<dbReference type="InterPro" id="IPR013023">
    <property type="entry name" value="KARI"/>
</dbReference>
<dbReference type="InterPro" id="IPR000506">
    <property type="entry name" value="KARI_C"/>
</dbReference>
<dbReference type="InterPro" id="IPR013116">
    <property type="entry name" value="KARI_N"/>
</dbReference>
<dbReference type="InterPro" id="IPR014359">
    <property type="entry name" value="KARI_prok"/>
</dbReference>
<dbReference type="InterPro" id="IPR036291">
    <property type="entry name" value="NAD(P)-bd_dom_sf"/>
</dbReference>
<dbReference type="NCBIfam" id="TIGR00465">
    <property type="entry name" value="ilvC"/>
    <property type="match status" value="1"/>
</dbReference>
<dbReference type="NCBIfam" id="NF004017">
    <property type="entry name" value="PRK05479.1"/>
    <property type="match status" value="1"/>
</dbReference>
<dbReference type="NCBIfam" id="NF009940">
    <property type="entry name" value="PRK13403.1"/>
    <property type="match status" value="1"/>
</dbReference>
<dbReference type="PANTHER" id="PTHR21371">
    <property type="entry name" value="KETOL-ACID REDUCTOISOMERASE, MITOCHONDRIAL"/>
    <property type="match status" value="1"/>
</dbReference>
<dbReference type="PANTHER" id="PTHR21371:SF1">
    <property type="entry name" value="KETOL-ACID REDUCTOISOMERASE, MITOCHONDRIAL"/>
    <property type="match status" value="1"/>
</dbReference>
<dbReference type="Pfam" id="PF01450">
    <property type="entry name" value="KARI_C"/>
    <property type="match status" value="1"/>
</dbReference>
<dbReference type="Pfam" id="PF07991">
    <property type="entry name" value="KARI_N"/>
    <property type="match status" value="1"/>
</dbReference>
<dbReference type="PIRSF" id="PIRSF000116">
    <property type="entry name" value="IlvC_gammaproteo"/>
    <property type="match status" value="1"/>
</dbReference>
<dbReference type="SUPFAM" id="SSF48179">
    <property type="entry name" value="6-phosphogluconate dehydrogenase C-terminal domain-like"/>
    <property type="match status" value="1"/>
</dbReference>
<dbReference type="SUPFAM" id="SSF51735">
    <property type="entry name" value="NAD(P)-binding Rossmann-fold domains"/>
    <property type="match status" value="1"/>
</dbReference>
<dbReference type="PROSITE" id="PS51851">
    <property type="entry name" value="KARI_C"/>
    <property type="match status" value="1"/>
</dbReference>
<dbReference type="PROSITE" id="PS51850">
    <property type="entry name" value="KARI_N"/>
    <property type="match status" value="1"/>
</dbReference>
<organism>
    <name type="scientific">Synechococcus sp. (strain CC9605)</name>
    <dbReference type="NCBI Taxonomy" id="110662"/>
    <lineage>
        <taxon>Bacteria</taxon>
        <taxon>Bacillati</taxon>
        <taxon>Cyanobacteriota</taxon>
        <taxon>Cyanophyceae</taxon>
        <taxon>Synechococcales</taxon>
        <taxon>Synechococcaceae</taxon>
        <taxon>Synechococcus</taxon>
    </lineage>
</organism>
<name>ILVC_SYNSC</name>
<sequence length="331" mass="35824">MAQLFYDSDADLGLLNGKTVAIIGYGSQGHAHALNLKDSGVNVVVGLYDGSRSAEKAKADGLEVLSVADASAKADWIMVLLPDEFQKDVYEKEIAPHLNAGKVLSFAHGFNIRFELIKPPADVDVVMIAPKGPGHTVRWEYQNGQGVPALFAIEQDASGNARGMAMAYAKGIGGTRAGILETNFKEETETDLFGEQAVLCGGLSELVKAGFETLVEAGYQPELAYFECLHEVKLIVDLMVKGGLTSMRDSISNTAEYGDYVSGPRLITADTKAEMKRVLADIQDGTFARNFVAECEAGKPEMKKVRDRDSQHPIEKVGKGLRSMFSWLKDA</sequence>
<proteinExistence type="inferred from homology"/>
<protein>
    <recommendedName>
        <fullName evidence="1">Ketol-acid reductoisomerase (NADP(+))</fullName>
        <shortName evidence="1">KARI</shortName>
        <ecNumber evidence="1">1.1.1.86</ecNumber>
    </recommendedName>
    <alternativeName>
        <fullName evidence="1">Acetohydroxy-acid isomeroreductase</fullName>
        <shortName evidence="1">AHIR</shortName>
    </alternativeName>
    <alternativeName>
        <fullName evidence="1">Alpha-keto-beta-hydroxylacyl reductoisomerase</fullName>
    </alternativeName>
    <alternativeName>
        <fullName evidence="1">Ketol-acid reductoisomerase type 1</fullName>
    </alternativeName>
    <alternativeName>
        <fullName evidence="1">Ketol-acid reductoisomerase type I</fullName>
    </alternativeName>
</protein>
<gene>
    <name evidence="1" type="primary">ilvC</name>
    <name type="ordered locus">Syncc9605_0839</name>
</gene>